<comment type="function">
    <text evidence="2 8">Broad-specificity lyase involved in ulvan degradation (PubMed:30279430). Ulvan is the main polysaccharide component of the Ulvales (green seaweed) cell wall. It is composed of disaccharide building blocks comprising 3-sulfated rhamnose (Rha3S) linked to D-glucuronic acid (GlcA), L-iduronic acid (IduA), or D-xylose (Xyl) (Probable) (PubMed:30279430). Ulvan lyase catalyzes the endolytic cleavage of the glycosidic bond between Rha3S and the uronic acids GlcA or IduA, producing oligosaccharides that have unsaturated 4-deoxy-L-threo-hex-4-enopyranosiduronic acid (deltaUA) at the non-reducing end. This results eventually in the degradation of the ulvan polysaccharide into deltaUA-Rha3S disaccharides and deltaUA-Rha3S-Xyl-Rha3S tetrasaccharides. It is also able to degrade the glycosaminoglycans heparan sulfate and chondroitin sulfate. Not active against pectin, xanthan or alginate (PubMed:30279430).</text>
</comment>
<comment type="catalytic activity">
    <reaction evidence="2">
        <text>Endolytic cleavage of (1-&gt;4)-beta-galactosaminic bonds between N-acetylgalactosamine and either D-glucuronic acid or L-iduronic acid to produce a mixture of Delta(4)-unsaturated oligosaccharides of different sizes that are ultimately degraded to Delta(4)-unsaturated tetra- and disaccharides.</text>
        <dbReference type="EC" id="4.2.2.20"/>
    </reaction>
</comment>
<comment type="catalytic activity">
    <reaction evidence="2">
        <text>Elimination of sulfate, appears to act on linkages between N-acetyl-D-glucosamine and uronate. Product is an unsaturated sugar.</text>
        <dbReference type="EC" id="4.2.2.8"/>
    </reaction>
</comment>
<comment type="biophysicochemical properties">
    <kinetics>
        <KM evidence="2">0.77 mg/ml for ulvan</KM>
    </kinetics>
    <phDependence>
        <text evidence="2">Optimum pH is 8.</text>
    </phDependence>
    <temperatureDependence>
        <text evidence="2">Optimum temperature is 40 degrees Celsius.</text>
    </temperatureDependence>
</comment>
<comment type="subcellular location">
    <subcellularLocation>
        <location evidence="7 8">Periplasm</location>
    </subcellularLocation>
</comment>
<comment type="induction">
    <text evidence="3">By ulvan and rhamnose.</text>
</comment>
<comment type="similarity">
    <text evidence="6">Belongs to the polysaccharide lyase 37 family.</text>
</comment>
<comment type="sequence caution" evidence="9">
    <conflict type="erroneous initiation">
        <sequence resource="EMBL-CDS" id="CDF79930"/>
    </conflict>
    <text>Truncated N-terminus.</text>
</comment>
<gene>
    <name type="ORF">BN863_22180</name>
</gene>
<name>PLH29_FORAG</name>
<evidence type="ECO:0000255" key="1"/>
<evidence type="ECO:0000269" key="2">
    <source>
    </source>
</evidence>
<evidence type="ECO:0000269" key="3">
    <source>
    </source>
</evidence>
<evidence type="ECO:0000303" key="4">
    <source>
    </source>
</evidence>
<evidence type="ECO:0000303" key="5">
    <source>
    </source>
</evidence>
<evidence type="ECO:0000305" key="6"/>
<evidence type="ECO:0000305" key="7">
    <source>
    </source>
</evidence>
<evidence type="ECO:0000305" key="8">
    <source>
    </source>
</evidence>
<evidence type="ECO:0000305" key="9">
    <source ref="2"/>
</evidence>
<organism>
    <name type="scientific">Formosa agariphila (strain DSM 15362 / KCTC 12365 / LMG 23005 / KMM 3901 / M-2Alg 35-1)</name>
    <dbReference type="NCBI Taxonomy" id="1347342"/>
    <lineage>
        <taxon>Bacteria</taxon>
        <taxon>Pseudomonadati</taxon>
        <taxon>Bacteroidota</taxon>
        <taxon>Flavobacteriia</taxon>
        <taxon>Flavobacteriales</taxon>
        <taxon>Flavobacteriaceae</taxon>
        <taxon>Formosa</taxon>
    </lineage>
</organism>
<keyword id="KW-0456">Lyase</keyword>
<keyword id="KW-0574">Periplasm</keyword>
<keyword id="KW-1185">Reference proteome</keyword>
<keyword id="KW-0732">Signal</keyword>
<sequence>MKRRNFIQLSSLATIGMSLPSAGIVNACSSFPEQSLEFKNLTSELLKEWCDGMLKVQINNPSNLEEHGALRCPSCSHIHGRCMDAVYPFLYMADVSGDEKYIEAAKLVMIWAENNVSQENGAWTVIPNPKSWKGITIFGAIALAESLHYHSHILDDKTLKAWTNRLARAGQYIYDTFTIDFTNINYGGTAIYGLDIIGDVLGNGNFKEKSKKMAEEVQAFFTKNDYLLYGECKPEADKLSAKGLHGVDLGYNVEETLNSLVMYALKNDDQALLQIVTKSLNSHLEFMLPDGGWDNSWGNRMYKWTYWGSRTCDGSQPAFAMMAHINPAFGTAAVKNTELLKQCTANGLLHGGPHYISAGIPPCVHHTFTHAKPLAALLDHWKHLPEINKTTALPRVTANGIKHFKDLDVLLFSRGDWRGTVSAYDAEYHYKKDYRQATGGSLGILYHNKVGLLCAASMAVYNMVEPYNQQPQPGKDIALTPRIETFKEDQWYTNLYDLTANLEAIDTKEVINLASVVKLKNESRKMVSGTASEFHLTYSCAKEGLTIKVSTQQDILEPTAFVLPIASPEKEKVEFVNEHEIKISKPGGVVTIKANVPLKLKEYSGTRTFNMVPGLEALPIELFFETHIKELVLIVSVV</sequence>
<protein>
    <recommendedName>
        <fullName evidence="4">Broad-specificity ulvan lyase</fullName>
        <ecNumber evidence="2">4.2.2.-</ecNumber>
        <ecNumber evidence="2">4.2.2.20</ecNumber>
        <ecNumber evidence="2">4.2.2.8</ecNumber>
    </recommendedName>
    <alternativeName>
        <fullName evidence="5">P29</fullName>
    </alternativeName>
    <alternativeName>
        <fullName evidence="5">Polysaccharide utilization locus H protein P29</fullName>
        <shortName>PUL H protein P29</shortName>
    </alternativeName>
</protein>
<reference key="1">
    <citation type="journal article" date="2013" name="Appl. Environ. Microbiol.">
        <title>The genome of the alga-associated marine flavobacterium Formosa agariphila KMM 3901T reveals a broad potential for degradation of algal polysaccharides.</title>
        <authorList>
            <person name="Mann A.J."/>
            <person name="Hahnke R.L."/>
            <person name="Huang S."/>
            <person name="Werner J."/>
            <person name="Xing P."/>
            <person name="Barbeyron T."/>
            <person name="Huettel B."/>
            <person name="Stueber K."/>
            <person name="Reinhardt R."/>
            <person name="Harder J."/>
            <person name="Gloeckner F.O."/>
            <person name="Amann R.I."/>
            <person name="Teeling H."/>
        </authorList>
    </citation>
    <scope>NUCLEOTIDE SEQUENCE [LARGE SCALE GENOMIC DNA]</scope>
    <source>
        <strain>DSM 15362 / KCTC 12365 / LMG 23005 / KMM 3901 / M-2Alg 35-1</strain>
    </source>
</reference>
<reference key="2">
    <citation type="journal article" date="2017" name="Algal Res.">
        <title>The enzymatic ulvan depolymerisation system from the alga-associated marine flavobacterium Formosa agariphila.</title>
        <authorList>
            <person name="Salinas A."/>
            <person name="French C.E."/>
        </authorList>
    </citation>
    <scope>REVISION OF GENE MODEL</scope>
</reference>
<reference key="3">
    <citation type="journal article" date="2018" name="Sci. Rep.">
        <title>A novel ulvan lyase family with broad-spectrum activity from the ulvan utilisation loci of Formosa agariphila KMM 3901.</title>
        <authorList>
            <person name="Konasani V.R."/>
            <person name="Jin C."/>
            <person name="Karlsson N.G."/>
            <person name="Albers E."/>
        </authorList>
    </citation>
    <scope>FUNCTION</scope>
    <scope>CATALYTIC ACTIVITY</scope>
    <scope>BIOPHYSICOCHEMICAL PROPERTIES</scope>
    <scope>SUBCELLULAR LOCATION</scope>
</reference>
<reference key="4">
    <citation type="journal article" date="2019" name="Nat. Chem. Biol.">
        <title>A marine bacterial enzymatic cascade degrades the algal polysaccharide ulvan.</title>
        <authorList>
            <person name="Reisky L."/>
            <person name="Prechoux A."/>
            <person name="Zuehlke M.K."/>
            <person name="Baeumgen M."/>
            <person name="Robb C.S."/>
            <person name="Gerlach N."/>
            <person name="Roret T."/>
            <person name="Stanetty C."/>
            <person name="Larocque R."/>
            <person name="Michel G."/>
            <person name="Song T."/>
            <person name="Markert S."/>
            <person name="Unfried F."/>
            <person name="Mihovilovic M.D."/>
            <person name="Trautwein-Schult A."/>
            <person name="Becher D."/>
            <person name="Schweder T."/>
            <person name="Bornscheuer U.T."/>
            <person name="Hehemann J.H."/>
        </authorList>
    </citation>
    <scope>FUNCTION</scope>
    <scope>SUBCELLULAR LOCATION</scope>
    <scope>INDUCTION</scope>
</reference>
<accession>T2KMH5</accession>
<proteinExistence type="evidence at protein level"/>
<dbReference type="EC" id="4.2.2.-" evidence="2"/>
<dbReference type="EC" id="4.2.2.20" evidence="2"/>
<dbReference type="EC" id="4.2.2.8" evidence="2"/>
<dbReference type="EMBL" id="HG315671">
    <property type="protein sequence ID" value="CDF79930.1"/>
    <property type="status" value="ALT_INIT"/>
    <property type="molecule type" value="Genomic_DNA"/>
</dbReference>
<dbReference type="RefSeq" id="WP_038530528.1">
    <property type="nucleotide sequence ID" value="NZ_HG315671.1"/>
</dbReference>
<dbReference type="STRING" id="1347342.BN863_22180"/>
<dbReference type="PATRIC" id="fig|1347342.6.peg.2225"/>
<dbReference type="eggNOG" id="ENOG502ZAAD">
    <property type="taxonomic scope" value="Bacteria"/>
</dbReference>
<dbReference type="HOGENOM" id="CLU_455455_0_0_10"/>
<dbReference type="OrthoDB" id="2339489at2"/>
<dbReference type="Proteomes" id="UP000016160">
    <property type="component" value="Chromosome"/>
</dbReference>
<dbReference type="GO" id="GO:0042597">
    <property type="term" value="C:periplasmic space"/>
    <property type="evidence" value="ECO:0007669"/>
    <property type="project" value="UniProtKB-SubCell"/>
</dbReference>
<dbReference type="GO" id="GO:0034000">
    <property type="term" value="F:chondroitin-sulfate-ABC endolyase activity"/>
    <property type="evidence" value="ECO:0007669"/>
    <property type="project" value="UniProtKB-EC"/>
</dbReference>
<dbReference type="GO" id="GO:0015021">
    <property type="term" value="F:heparin-sulfate lyase activity"/>
    <property type="evidence" value="ECO:0007669"/>
    <property type="project" value="UniProtKB-EC"/>
</dbReference>
<dbReference type="GO" id="GO:0005975">
    <property type="term" value="P:carbohydrate metabolic process"/>
    <property type="evidence" value="ECO:0007669"/>
    <property type="project" value="InterPro"/>
</dbReference>
<dbReference type="InterPro" id="IPR008928">
    <property type="entry name" value="6-hairpin_glycosidase_sf"/>
</dbReference>
<dbReference type="SUPFAM" id="SSF48208">
    <property type="entry name" value="Six-hairpin glycosidases"/>
    <property type="match status" value="1"/>
</dbReference>
<feature type="signal peptide" evidence="1">
    <location>
        <begin position="1"/>
        <end position="27"/>
    </location>
</feature>
<feature type="chain" id="PRO_0000448331" description="Broad-specificity ulvan lyase">
    <location>
        <begin position="28"/>
        <end position="638"/>
    </location>
</feature>